<comment type="function">
    <text evidence="1">Necessary for normal cell division and for the maintenance of normal septation.</text>
</comment>
<comment type="cofactor">
    <cofactor evidence="1">
        <name>Mg(2+)</name>
        <dbReference type="ChEBI" id="CHEBI:18420"/>
    </cofactor>
</comment>
<comment type="similarity">
    <text evidence="1">Belongs to the TRAFAC class TrmE-Era-EngA-EngB-Septin-like GTPase superfamily. EngB GTPase family.</text>
</comment>
<organism>
    <name type="scientific">Burkholderia pseudomallei (strain K96243)</name>
    <dbReference type="NCBI Taxonomy" id="272560"/>
    <lineage>
        <taxon>Bacteria</taxon>
        <taxon>Pseudomonadati</taxon>
        <taxon>Pseudomonadota</taxon>
        <taxon>Betaproteobacteria</taxon>
        <taxon>Burkholderiales</taxon>
        <taxon>Burkholderiaceae</taxon>
        <taxon>Burkholderia</taxon>
        <taxon>pseudomallei group</taxon>
    </lineage>
</organism>
<protein>
    <recommendedName>
        <fullName evidence="1">Probable GTP-binding protein EngB</fullName>
    </recommendedName>
</protein>
<reference key="1">
    <citation type="journal article" date="2004" name="Proc. Natl. Acad. Sci. U.S.A.">
        <title>Genomic plasticity of the causative agent of melioidosis, Burkholderia pseudomallei.</title>
        <authorList>
            <person name="Holden M.T.G."/>
            <person name="Titball R.W."/>
            <person name="Peacock S.J."/>
            <person name="Cerdeno-Tarraga A.-M."/>
            <person name="Atkins T."/>
            <person name="Crossman L.C."/>
            <person name="Pitt T."/>
            <person name="Churcher C."/>
            <person name="Mungall K.L."/>
            <person name="Bentley S.D."/>
            <person name="Sebaihia M."/>
            <person name="Thomson N.R."/>
            <person name="Bason N."/>
            <person name="Beacham I.R."/>
            <person name="Brooks K."/>
            <person name="Brown K.A."/>
            <person name="Brown N.F."/>
            <person name="Challis G.L."/>
            <person name="Cherevach I."/>
            <person name="Chillingworth T."/>
            <person name="Cronin A."/>
            <person name="Crossett B."/>
            <person name="Davis P."/>
            <person name="DeShazer D."/>
            <person name="Feltwell T."/>
            <person name="Fraser A."/>
            <person name="Hance Z."/>
            <person name="Hauser H."/>
            <person name="Holroyd S."/>
            <person name="Jagels K."/>
            <person name="Keith K.E."/>
            <person name="Maddison M."/>
            <person name="Moule S."/>
            <person name="Price C."/>
            <person name="Quail M.A."/>
            <person name="Rabbinowitsch E."/>
            <person name="Rutherford K."/>
            <person name="Sanders M."/>
            <person name="Simmonds M."/>
            <person name="Songsivilai S."/>
            <person name="Stevens K."/>
            <person name="Tumapa S."/>
            <person name="Vesaratchavest M."/>
            <person name="Whitehead S."/>
            <person name="Yeats C."/>
            <person name="Barrell B.G."/>
            <person name="Oyston P.C.F."/>
            <person name="Parkhill J."/>
        </authorList>
    </citation>
    <scope>NUCLEOTIDE SEQUENCE [LARGE SCALE GENOMIC DNA]</scope>
    <source>
        <strain>K96243</strain>
    </source>
</reference>
<sequence>MAFLLHQARFFTTVNHLRDLPPTVQPEVAFAGRSNAGKSTAINVLCNQKRLAFASKTPGRTQHINYFSVGPAAEPVAHLVDLPGYGYAEVPGAAKAHWEQLLSSYLQTRPQLCGMILMMDARRPLTELDRRMIEWFAPTGKPIHSLLTKCDKLTRQESINALRATQKSLDAYRDAGYAGKLTVQLFSALKRTGLDDAHALIESWVRPAAADEDRAAVAE</sequence>
<gene>
    <name evidence="1" type="primary">engB</name>
    <name type="ordered locus">BPSL3182</name>
</gene>
<feature type="chain" id="PRO_0000266834" description="Probable GTP-binding protein EngB">
    <location>
        <begin position="1"/>
        <end position="219"/>
    </location>
</feature>
<feature type="domain" description="EngB-type G" evidence="1">
    <location>
        <begin position="24"/>
        <end position="207"/>
    </location>
</feature>
<feature type="binding site" evidence="1">
    <location>
        <begin position="32"/>
        <end position="39"/>
    </location>
    <ligand>
        <name>GTP</name>
        <dbReference type="ChEBI" id="CHEBI:37565"/>
    </ligand>
</feature>
<feature type="binding site" evidence="1">
    <location>
        <position position="39"/>
    </location>
    <ligand>
        <name>Mg(2+)</name>
        <dbReference type="ChEBI" id="CHEBI:18420"/>
    </ligand>
</feature>
<feature type="binding site" evidence="1">
    <location>
        <begin position="59"/>
        <end position="63"/>
    </location>
    <ligand>
        <name>GTP</name>
        <dbReference type="ChEBI" id="CHEBI:37565"/>
    </ligand>
</feature>
<feature type="binding site" evidence="1">
    <location>
        <position position="61"/>
    </location>
    <ligand>
        <name>Mg(2+)</name>
        <dbReference type="ChEBI" id="CHEBI:18420"/>
    </ligand>
</feature>
<feature type="binding site" evidence="1">
    <location>
        <begin position="81"/>
        <end position="84"/>
    </location>
    <ligand>
        <name>GTP</name>
        <dbReference type="ChEBI" id="CHEBI:37565"/>
    </ligand>
</feature>
<feature type="binding site" evidence="1">
    <location>
        <begin position="148"/>
        <end position="151"/>
    </location>
    <ligand>
        <name>GTP</name>
        <dbReference type="ChEBI" id="CHEBI:37565"/>
    </ligand>
</feature>
<feature type="binding site" evidence="1">
    <location>
        <begin position="185"/>
        <end position="188"/>
    </location>
    <ligand>
        <name>GTP</name>
        <dbReference type="ChEBI" id="CHEBI:37565"/>
    </ligand>
</feature>
<dbReference type="EMBL" id="BX571965">
    <property type="protein sequence ID" value="CAH37193.1"/>
    <property type="molecule type" value="Genomic_DNA"/>
</dbReference>
<dbReference type="RefSeq" id="YP_109776.1">
    <property type="nucleotide sequence ID" value="NC_006350.1"/>
</dbReference>
<dbReference type="SMR" id="Q63Q42"/>
<dbReference type="STRING" id="272560.BPSL3182"/>
<dbReference type="KEGG" id="bps:BPSL3182"/>
<dbReference type="PATRIC" id="fig|272560.6.peg.3635"/>
<dbReference type="eggNOG" id="COG0218">
    <property type="taxonomic scope" value="Bacteria"/>
</dbReference>
<dbReference type="Proteomes" id="UP000000605">
    <property type="component" value="Chromosome 1"/>
</dbReference>
<dbReference type="GO" id="GO:0005829">
    <property type="term" value="C:cytosol"/>
    <property type="evidence" value="ECO:0007669"/>
    <property type="project" value="TreeGrafter"/>
</dbReference>
<dbReference type="GO" id="GO:0005525">
    <property type="term" value="F:GTP binding"/>
    <property type="evidence" value="ECO:0007669"/>
    <property type="project" value="UniProtKB-UniRule"/>
</dbReference>
<dbReference type="GO" id="GO:0046872">
    <property type="term" value="F:metal ion binding"/>
    <property type="evidence" value="ECO:0007669"/>
    <property type="project" value="UniProtKB-KW"/>
</dbReference>
<dbReference type="GO" id="GO:0000917">
    <property type="term" value="P:division septum assembly"/>
    <property type="evidence" value="ECO:0007669"/>
    <property type="project" value="UniProtKB-KW"/>
</dbReference>
<dbReference type="CDD" id="cd01876">
    <property type="entry name" value="YihA_EngB"/>
    <property type="match status" value="1"/>
</dbReference>
<dbReference type="FunFam" id="3.40.50.300:FF:000098">
    <property type="entry name" value="Probable GTP-binding protein EngB"/>
    <property type="match status" value="1"/>
</dbReference>
<dbReference type="Gene3D" id="3.40.50.300">
    <property type="entry name" value="P-loop containing nucleotide triphosphate hydrolases"/>
    <property type="match status" value="1"/>
</dbReference>
<dbReference type="HAMAP" id="MF_00321">
    <property type="entry name" value="GTPase_EngB"/>
    <property type="match status" value="1"/>
</dbReference>
<dbReference type="InterPro" id="IPR030393">
    <property type="entry name" value="G_ENGB_dom"/>
</dbReference>
<dbReference type="InterPro" id="IPR006073">
    <property type="entry name" value="GTP-bd"/>
</dbReference>
<dbReference type="InterPro" id="IPR019987">
    <property type="entry name" value="GTP-bd_ribosome_bio_YsxC"/>
</dbReference>
<dbReference type="InterPro" id="IPR027417">
    <property type="entry name" value="P-loop_NTPase"/>
</dbReference>
<dbReference type="NCBIfam" id="TIGR03598">
    <property type="entry name" value="GTPase_YsxC"/>
    <property type="match status" value="1"/>
</dbReference>
<dbReference type="PANTHER" id="PTHR11649:SF13">
    <property type="entry name" value="ENGB-TYPE G DOMAIN-CONTAINING PROTEIN"/>
    <property type="match status" value="1"/>
</dbReference>
<dbReference type="PANTHER" id="PTHR11649">
    <property type="entry name" value="MSS1/TRME-RELATED GTP-BINDING PROTEIN"/>
    <property type="match status" value="1"/>
</dbReference>
<dbReference type="Pfam" id="PF01926">
    <property type="entry name" value="MMR_HSR1"/>
    <property type="match status" value="1"/>
</dbReference>
<dbReference type="SUPFAM" id="SSF52540">
    <property type="entry name" value="P-loop containing nucleoside triphosphate hydrolases"/>
    <property type="match status" value="1"/>
</dbReference>
<dbReference type="PROSITE" id="PS51706">
    <property type="entry name" value="G_ENGB"/>
    <property type="match status" value="1"/>
</dbReference>
<proteinExistence type="inferred from homology"/>
<name>ENGB_BURPS</name>
<accession>Q63Q42</accession>
<keyword id="KW-0131">Cell cycle</keyword>
<keyword id="KW-0132">Cell division</keyword>
<keyword id="KW-0342">GTP-binding</keyword>
<keyword id="KW-0460">Magnesium</keyword>
<keyword id="KW-0479">Metal-binding</keyword>
<keyword id="KW-0547">Nucleotide-binding</keyword>
<keyword id="KW-1185">Reference proteome</keyword>
<keyword id="KW-0717">Septation</keyword>
<evidence type="ECO:0000255" key="1">
    <source>
        <dbReference type="HAMAP-Rule" id="MF_00321"/>
    </source>
</evidence>